<protein>
    <recommendedName>
        <fullName evidence="1">Protein-methionine-sulfoxide reductase heme-binding subunit MsrQ</fullName>
    </recommendedName>
    <alternativeName>
        <fullName evidence="1">Flavocytochrome MsrQ</fullName>
    </alternativeName>
</protein>
<reference key="1">
    <citation type="journal article" date="2009" name="Genome Res.">
        <title>Newly introduced genomic prophage islands are critical determinants of in vivo competitiveness in the Liverpool epidemic strain of Pseudomonas aeruginosa.</title>
        <authorList>
            <person name="Winstanley C."/>
            <person name="Langille M.G.I."/>
            <person name="Fothergill J.L."/>
            <person name="Kukavica-Ibrulj I."/>
            <person name="Paradis-Bleau C."/>
            <person name="Sanschagrin F."/>
            <person name="Thomson N.R."/>
            <person name="Winsor G.L."/>
            <person name="Quail M.A."/>
            <person name="Lennard N."/>
            <person name="Bignell A."/>
            <person name="Clarke L."/>
            <person name="Seeger K."/>
            <person name="Saunders D."/>
            <person name="Harris D."/>
            <person name="Parkhill J."/>
            <person name="Hancock R.E.W."/>
            <person name="Brinkman F.S.L."/>
            <person name="Levesque R.C."/>
        </authorList>
    </citation>
    <scope>NUCLEOTIDE SEQUENCE [LARGE SCALE GENOMIC DNA]</scope>
    <source>
        <strain>LESB58</strain>
    </source>
</reference>
<feature type="chain" id="PRO_1000138738" description="Protein-methionine-sulfoxide reductase heme-binding subunit MsrQ">
    <location>
        <begin position="1"/>
        <end position="202"/>
    </location>
</feature>
<feature type="transmembrane region" description="Helical" evidence="1">
    <location>
        <begin position="8"/>
        <end position="28"/>
    </location>
</feature>
<feature type="transmembrane region" description="Helical" evidence="1">
    <location>
        <begin position="42"/>
        <end position="62"/>
    </location>
</feature>
<feature type="transmembrane region" description="Helical" evidence="1">
    <location>
        <begin position="75"/>
        <end position="95"/>
    </location>
</feature>
<feature type="transmembrane region" description="Helical" evidence="1">
    <location>
        <begin position="110"/>
        <end position="130"/>
    </location>
</feature>
<feature type="transmembrane region" description="Helical" evidence="1">
    <location>
        <begin position="147"/>
        <end position="167"/>
    </location>
</feature>
<feature type="transmembrane region" description="Helical" evidence="1">
    <location>
        <begin position="169"/>
        <end position="189"/>
    </location>
</feature>
<evidence type="ECO:0000255" key="1">
    <source>
        <dbReference type="HAMAP-Rule" id="MF_01207"/>
    </source>
</evidence>
<proteinExistence type="inferred from homology"/>
<keyword id="KW-0997">Cell inner membrane</keyword>
<keyword id="KW-1003">Cell membrane</keyword>
<keyword id="KW-0249">Electron transport</keyword>
<keyword id="KW-0285">Flavoprotein</keyword>
<keyword id="KW-0288">FMN</keyword>
<keyword id="KW-0349">Heme</keyword>
<keyword id="KW-0408">Iron</keyword>
<keyword id="KW-0472">Membrane</keyword>
<keyword id="KW-0479">Metal-binding</keyword>
<keyword id="KW-0812">Transmembrane</keyword>
<keyword id="KW-1133">Transmembrane helix</keyword>
<keyword id="KW-0813">Transport</keyword>
<dbReference type="EMBL" id="FM209186">
    <property type="protein sequence ID" value="CAW29830.1"/>
    <property type="molecule type" value="Genomic_DNA"/>
</dbReference>
<dbReference type="RefSeq" id="WP_003100143.1">
    <property type="nucleotide sequence ID" value="NC_011770.1"/>
</dbReference>
<dbReference type="SMR" id="B7V1A3"/>
<dbReference type="KEGG" id="pag:PLES_50761"/>
<dbReference type="HOGENOM" id="CLU_080662_0_1_6"/>
<dbReference type="GO" id="GO:0005886">
    <property type="term" value="C:plasma membrane"/>
    <property type="evidence" value="ECO:0007669"/>
    <property type="project" value="UniProtKB-SubCell"/>
</dbReference>
<dbReference type="GO" id="GO:0009055">
    <property type="term" value="F:electron transfer activity"/>
    <property type="evidence" value="ECO:0007669"/>
    <property type="project" value="UniProtKB-UniRule"/>
</dbReference>
<dbReference type="GO" id="GO:0010181">
    <property type="term" value="F:FMN binding"/>
    <property type="evidence" value="ECO:0007669"/>
    <property type="project" value="UniProtKB-UniRule"/>
</dbReference>
<dbReference type="GO" id="GO:0020037">
    <property type="term" value="F:heme binding"/>
    <property type="evidence" value="ECO:0007669"/>
    <property type="project" value="UniProtKB-UniRule"/>
</dbReference>
<dbReference type="GO" id="GO:0046872">
    <property type="term" value="F:metal ion binding"/>
    <property type="evidence" value="ECO:0007669"/>
    <property type="project" value="UniProtKB-KW"/>
</dbReference>
<dbReference type="GO" id="GO:0016679">
    <property type="term" value="F:oxidoreductase activity, acting on diphenols and related substances as donors"/>
    <property type="evidence" value="ECO:0007669"/>
    <property type="project" value="TreeGrafter"/>
</dbReference>
<dbReference type="GO" id="GO:0030091">
    <property type="term" value="P:protein repair"/>
    <property type="evidence" value="ECO:0007669"/>
    <property type="project" value="UniProtKB-UniRule"/>
</dbReference>
<dbReference type="HAMAP" id="MF_01207">
    <property type="entry name" value="MsrQ"/>
    <property type="match status" value="1"/>
</dbReference>
<dbReference type="InterPro" id="IPR013130">
    <property type="entry name" value="Fe3_Rdtase_TM_dom"/>
</dbReference>
<dbReference type="InterPro" id="IPR022837">
    <property type="entry name" value="MsrQ-like"/>
</dbReference>
<dbReference type="NCBIfam" id="NF003831">
    <property type="entry name" value="PRK05419.1-2"/>
    <property type="match status" value="1"/>
</dbReference>
<dbReference type="PANTHER" id="PTHR36964">
    <property type="entry name" value="PROTEIN-METHIONINE-SULFOXIDE REDUCTASE HEME-BINDING SUBUNIT MSRQ"/>
    <property type="match status" value="1"/>
</dbReference>
<dbReference type="PANTHER" id="PTHR36964:SF1">
    <property type="entry name" value="PROTEIN-METHIONINE-SULFOXIDE REDUCTASE HEME-BINDING SUBUNIT MSRQ"/>
    <property type="match status" value="1"/>
</dbReference>
<dbReference type="Pfam" id="PF01794">
    <property type="entry name" value="Ferric_reduct"/>
    <property type="match status" value="1"/>
</dbReference>
<accession>B7V1A3</accession>
<gene>
    <name evidence="1" type="primary">msrQ</name>
    <name type="ordered locus">PLES_50761</name>
</gene>
<comment type="function">
    <text evidence="1">Part of the MsrPQ system that repairs oxidized periplasmic proteins containing methionine sulfoxide residues (Met-O), using respiratory chain electrons. Thus protects these proteins from oxidative-stress damage caused by reactive species of oxygen and chlorine generated by the host defense mechanisms. MsrPQ is essential for the maintenance of envelope integrity under bleach stress, rescuing a wide series of structurally unrelated periplasmic proteins from methionine oxidation. MsrQ provides electrons for reduction to the reductase catalytic subunit MsrP, using the quinone pool of the respiratory chain.</text>
</comment>
<comment type="cofactor">
    <cofactor evidence="1">
        <name>FMN</name>
        <dbReference type="ChEBI" id="CHEBI:58210"/>
    </cofactor>
    <text evidence="1">Binds 1 FMN per subunit.</text>
</comment>
<comment type="cofactor">
    <cofactor evidence="1">
        <name>heme b</name>
        <dbReference type="ChEBI" id="CHEBI:60344"/>
    </cofactor>
    <text evidence="1">Binds 1 heme b (iron(II)-protoporphyrin IX) group per subunit.</text>
</comment>
<comment type="subunit">
    <text evidence="1">Heterodimer of a catalytic subunit (MsrP) and a heme-binding subunit (MsrQ).</text>
</comment>
<comment type="subcellular location">
    <subcellularLocation>
        <location evidence="1">Cell inner membrane</location>
        <topology evidence="1">Multi-pass membrane protein</topology>
    </subcellularLocation>
</comment>
<comment type="similarity">
    <text evidence="1">Belongs to the MsrQ family.</text>
</comment>
<name>MSRQ_PSEA8</name>
<organism>
    <name type="scientific">Pseudomonas aeruginosa (strain LESB58)</name>
    <dbReference type="NCBI Taxonomy" id="557722"/>
    <lineage>
        <taxon>Bacteria</taxon>
        <taxon>Pseudomonadati</taxon>
        <taxon>Pseudomonadota</taxon>
        <taxon>Gammaproteobacteria</taxon>
        <taxon>Pseudomonadales</taxon>
        <taxon>Pseudomonadaceae</taxon>
        <taxon>Pseudomonas</taxon>
    </lineage>
</organism>
<sequence>MRYWYLRLAVFLGALAVPAWWLYQAWIFALGPDPGKTLVDRLGLGALVLLLLTLAMTPLQKLSGWPGWIAVRRQLGLWCFTYVLLHLSAYCVFILGLDWGQLGIELSKRPYIIVGMLGFICLFLLAITSNRFAMRKLGSRWKKLHRLVYLILGLGLLHMLWVVRADLEEWTLYAVVGASLMLLRLPSIARRLPRLRTRPGVS</sequence>